<organism>
    <name type="scientific">Chromohalobacter salexigens (strain ATCC BAA-138 / DSM 3043 / CIP 106854 / NCIMB 13768 / 1H11)</name>
    <dbReference type="NCBI Taxonomy" id="290398"/>
    <lineage>
        <taxon>Bacteria</taxon>
        <taxon>Pseudomonadati</taxon>
        <taxon>Pseudomonadota</taxon>
        <taxon>Gammaproteobacteria</taxon>
        <taxon>Oceanospirillales</taxon>
        <taxon>Halomonadaceae</taxon>
        <taxon>Chromohalobacter</taxon>
    </lineage>
</organism>
<name>LEUD_CHRSD</name>
<sequence>MRQFDRHQGLVAPMDRANVDTDLIIPKQFLKSIKRTGFGPNLFDELRYLDEGYPGQDVAKRPLNPDFVLNQPRYQGASVLLARRNFGCGSSREHAPWALEDFGFRVIIAPSFADIFFNNAFKNGLLLITFDEATVDRLFQEAEAEEGYRLDVDLEKQQVTTPSGEVLTFEVDPFRKHCLLEGLDDIGLTLKDADAIEDFEARHRQARPWLFRQAG</sequence>
<comment type="function">
    <text evidence="1">Catalyzes the isomerization between 2-isopropylmalate and 3-isopropylmalate, via the formation of 2-isopropylmaleate.</text>
</comment>
<comment type="catalytic activity">
    <reaction evidence="1">
        <text>(2R,3S)-3-isopropylmalate = (2S)-2-isopropylmalate</text>
        <dbReference type="Rhea" id="RHEA:32287"/>
        <dbReference type="ChEBI" id="CHEBI:1178"/>
        <dbReference type="ChEBI" id="CHEBI:35121"/>
        <dbReference type="EC" id="4.2.1.33"/>
    </reaction>
</comment>
<comment type="pathway">
    <text evidence="1">Amino-acid biosynthesis; L-leucine biosynthesis; L-leucine from 3-methyl-2-oxobutanoate: step 2/4.</text>
</comment>
<comment type="subunit">
    <text evidence="1">Heterodimer of LeuC and LeuD.</text>
</comment>
<comment type="similarity">
    <text evidence="1">Belongs to the LeuD family. LeuD type 1 subfamily.</text>
</comment>
<reference key="1">
    <citation type="journal article" date="2011" name="Stand. Genomic Sci.">
        <title>Complete genome sequence of the halophilic and highly halotolerant Chromohalobacter salexigens type strain (1H11(T)).</title>
        <authorList>
            <person name="Copeland A."/>
            <person name="O'Connor K."/>
            <person name="Lucas S."/>
            <person name="Lapidus A."/>
            <person name="Berry K.W."/>
            <person name="Detter J.C."/>
            <person name="Del Rio T.G."/>
            <person name="Hammon N."/>
            <person name="Dalin E."/>
            <person name="Tice H."/>
            <person name="Pitluck S."/>
            <person name="Bruce D."/>
            <person name="Goodwin L."/>
            <person name="Han C."/>
            <person name="Tapia R."/>
            <person name="Saunders E."/>
            <person name="Schmutz J."/>
            <person name="Brettin T."/>
            <person name="Larimer F."/>
            <person name="Land M."/>
            <person name="Hauser L."/>
            <person name="Vargas C."/>
            <person name="Nieto J.J."/>
            <person name="Kyrpides N.C."/>
            <person name="Ivanova N."/>
            <person name="Goker M."/>
            <person name="Klenk H.P."/>
            <person name="Csonka L.N."/>
            <person name="Woyke T."/>
        </authorList>
    </citation>
    <scope>NUCLEOTIDE SEQUENCE [LARGE SCALE GENOMIC DNA]</scope>
    <source>
        <strain>ATCC BAA-138 / DSM 3043 / CIP 106854 / NCIMB 13768 / 1H11</strain>
    </source>
</reference>
<gene>
    <name evidence="1" type="primary">leuD</name>
    <name type="ordered locus">Csal_2452</name>
</gene>
<accession>Q1QUQ9</accession>
<evidence type="ECO:0000255" key="1">
    <source>
        <dbReference type="HAMAP-Rule" id="MF_01031"/>
    </source>
</evidence>
<protein>
    <recommendedName>
        <fullName evidence="1">3-isopropylmalate dehydratase small subunit</fullName>
        <ecNumber evidence="1">4.2.1.33</ecNumber>
    </recommendedName>
    <alternativeName>
        <fullName evidence="1">Alpha-IPM isomerase</fullName>
        <shortName evidence="1">IPMI</shortName>
    </alternativeName>
    <alternativeName>
        <fullName evidence="1">Isopropylmalate isomerase</fullName>
    </alternativeName>
</protein>
<proteinExistence type="inferred from homology"/>
<feature type="chain" id="PRO_1000063750" description="3-isopropylmalate dehydratase small subunit">
    <location>
        <begin position="1"/>
        <end position="215"/>
    </location>
</feature>
<dbReference type="EC" id="4.2.1.33" evidence="1"/>
<dbReference type="EMBL" id="CP000285">
    <property type="protein sequence ID" value="ABE59799.1"/>
    <property type="molecule type" value="Genomic_DNA"/>
</dbReference>
<dbReference type="RefSeq" id="WP_011507745.1">
    <property type="nucleotide sequence ID" value="NC_007963.1"/>
</dbReference>
<dbReference type="SMR" id="Q1QUQ9"/>
<dbReference type="STRING" id="290398.Csal_2452"/>
<dbReference type="GeneID" id="95335158"/>
<dbReference type="KEGG" id="csa:Csal_2452"/>
<dbReference type="eggNOG" id="COG0066">
    <property type="taxonomic scope" value="Bacteria"/>
</dbReference>
<dbReference type="HOGENOM" id="CLU_081378_0_3_6"/>
<dbReference type="OrthoDB" id="9777465at2"/>
<dbReference type="UniPathway" id="UPA00048">
    <property type="reaction ID" value="UER00071"/>
</dbReference>
<dbReference type="Proteomes" id="UP000000239">
    <property type="component" value="Chromosome"/>
</dbReference>
<dbReference type="GO" id="GO:0009316">
    <property type="term" value="C:3-isopropylmalate dehydratase complex"/>
    <property type="evidence" value="ECO:0007669"/>
    <property type="project" value="InterPro"/>
</dbReference>
<dbReference type="GO" id="GO:0003861">
    <property type="term" value="F:3-isopropylmalate dehydratase activity"/>
    <property type="evidence" value="ECO:0007669"/>
    <property type="project" value="UniProtKB-UniRule"/>
</dbReference>
<dbReference type="GO" id="GO:0009098">
    <property type="term" value="P:L-leucine biosynthetic process"/>
    <property type="evidence" value="ECO:0007669"/>
    <property type="project" value="UniProtKB-UniRule"/>
</dbReference>
<dbReference type="CDD" id="cd01577">
    <property type="entry name" value="IPMI_Swivel"/>
    <property type="match status" value="1"/>
</dbReference>
<dbReference type="FunFam" id="3.20.19.10:FF:000003">
    <property type="entry name" value="3-isopropylmalate dehydratase small subunit"/>
    <property type="match status" value="1"/>
</dbReference>
<dbReference type="Gene3D" id="3.20.19.10">
    <property type="entry name" value="Aconitase, domain 4"/>
    <property type="match status" value="1"/>
</dbReference>
<dbReference type="HAMAP" id="MF_01031">
    <property type="entry name" value="LeuD_type1"/>
    <property type="match status" value="1"/>
</dbReference>
<dbReference type="InterPro" id="IPR004431">
    <property type="entry name" value="3-IsopropMal_deHydase_ssu"/>
</dbReference>
<dbReference type="InterPro" id="IPR015928">
    <property type="entry name" value="Aconitase/3IPM_dehydase_swvl"/>
</dbReference>
<dbReference type="InterPro" id="IPR000573">
    <property type="entry name" value="AconitaseA/IPMdHydase_ssu_swvl"/>
</dbReference>
<dbReference type="InterPro" id="IPR033940">
    <property type="entry name" value="IPMI_Swivel"/>
</dbReference>
<dbReference type="InterPro" id="IPR050075">
    <property type="entry name" value="LeuD"/>
</dbReference>
<dbReference type="NCBIfam" id="TIGR00171">
    <property type="entry name" value="leuD"/>
    <property type="match status" value="1"/>
</dbReference>
<dbReference type="NCBIfam" id="NF002458">
    <property type="entry name" value="PRK01641.1"/>
    <property type="match status" value="1"/>
</dbReference>
<dbReference type="PANTHER" id="PTHR43345:SF5">
    <property type="entry name" value="3-ISOPROPYLMALATE DEHYDRATASE SMALL SUBUNIT"/>
    <property type="match status" value="1"/>
</dbReference>
<dbReference type="PANTHER" id="PTHR43345">
    <property type="entry name" value="3-ISOPROPYLMALATE DEHYDRATASE SMALL SUBUNIT 2-RELATED-RELATED"/>
    <property type="match status" value="1"/>
</dbReference>
<dbReference type="Pfam" id="PF00694">
    <property type="entry name" value="Aconitase_C"/>
    <property type="match status" value="1"/>
</dbReference>
<dbReference type="SUPFAM" id="SSF52016">
    <property type="entry name" value="LeuD/IlvD-like"/>
    <property type="match status" value="1"/>
</dbReference>
<keyword id="KW-0028">Amino-acid biosynthesis</keyword>
<keyword id="KW-0100">Branched-chain amino acid biosynthesis</keyword>
<keyword id="KW-0432">Leucine biosynthesis</keyword>
<keyword id="KW-0456">Lyase</keyword>
<keyword id="KW-1185">Reference proteome</keyword>